<protein>
    <recommendedName>
        <fullName evidence="1">Ribose-5-phosphate isomerase A</fullName>
        <ecNumber evidence="1">5.3.1.6</ecNumber>
    </recommendedName>
    <alternativeName>
        <fullName evidence="1">Phosphoriboisomerase A</fullName>
        <shortName evidence="1">PRI</shortName>
    </alternativeName>
</protein>
<keyword id="KW-0413">Isomerase</keyword>
<feature type="chain" id="PRO_1000097702" description="Ribose-5-phosphate isomerase A">
    <location>
        <begin position="1"/>
        <end position="254"/>
    </location>
</feature>
<feature type="active site" description="Proton acceptor" evidence="1">
    <location>
        <position position="127"/>
    </location>
</feature>
<feature type="binding site" evidence="1">
    <location>
        <begin position="45"/>
        <end position="48"/>
    </location>
    <ligand>
        <name>substrate</name>
    </ligand>
</feature>
<feature type="binding site" evidence="1">
    <location>
        <begin position="105"/>
        <end position="108"/>
    </location>
    <ligand>
        <name>substrate</name>
    </ligand>
</feature>
<feature type="binding site" evidence="1">
    <location>
        <begin position="118"/>
        <end position="121"/>
    </location>
    <ligand>
        <name>substrate</name>
    </ligand>
</feature>
<feature type="binding site" evidence="1">
    <location>
        <position position="145"/>
    </location>
    <ligand>
        <name>substrate</name>
    </ligand>
</feature>
<evidence type="ECO:0000255" key="1">
    <source>
        <dbReference type="HAMAP-Rule" id="MF_00170"/>
    </source>
</evidence>
<proteinExistence type="inferred from homology"/>
<gene>
    <name evidence="1" type="primary">rpiA</name>
    <name type="ordered locus">TPASS_0616</name>
</gene>
<name>RPIA_TREPS</name>
<organism>
    <name type="scientific">Treponema pallidum subsp. pallidum (strain SS14)</name>
    <dbReference type="NCBI Taxonomy" id="455434"/>
    <lineage>
        <taxon>Bacteria</taxon>
        <taxon>Pseudomonadati</taxon>
        <taxon>Spirochaetota</taxon>
        <taxon>Spirochaetia</taxon>
        <taxon>Spirochaetales</taxon>
        <taxon>Treponemataceae</taxon>
        <taxon>Treponema</taxon>
    </lineage>
</organism>
<comment type="function">
    <text evidence="1">Catalyzes the reversible conversion of ribose-5-phosphate to ribulose 5-phosphate.</text>
</comment>
<comment type="catalytic activity">
    <reaction evidence="1">
        <text>aldehydo-D-ribose 5-phosphate = D-ribulose 5-phosphate</text>
        <dbReference type="Rhea" id="RHEA:14657"/>
        <dbReference type="ChEBI" id="CHEBI:58121"/>
        <dbReference type="ChEBI" id="CHEBI:58273"/>
        <dbReference type="EC" id="5.3.1.6"/>
    </reaction>
</comment>
<comment type="pathway">
    <text evidence="1">Carbohydrate degradation; pentose phosphate pathway; D-ribose 5-phosphate from D-ribulose 5-phosphate (non-oxidative stage): step 1/1.</text>
</comment>
<comment type="subunit">
    <text evidence="1">Homodimer.</text>
</comment>
<comment type="similarity">
    <text evidence="1">Belongs to the ribose 5-phosphate isomerase family.</text>
</comment>
<accession>B2S3K6</accession>
<dbReference type="EC" id="5.3.1.6" evidence="1"/>
<dbReference type="EMBL" id="CP000805">
    <property type="protein sequence ID" value="ACD71035.1"/>
    <property type="molecule type" value="Genomic_DNA"/>
</dbReference>
<dbReference type="RefSeq" id="WP_010882062.1">
    <property type="nucleotide sequence ID" value="NC_021508.1"/>
</dbReference>
<dbReference type="SMR" id="B2S3K6"/>
<dbReference type="GeneID" id="93876383"/>
<dbReference type="KEGG" id="tpp:TPASS_0616"/>
<dbReference type="PATRIC" id="fig|455434.6.peg.610"/>
<dbReference type="UniPathway" id="UPA00115">
    <property type="reaction ID" value="UER00412"/>
</dbReference>
<dbReference type="Proteomes" id="UP000001202">
    <property type="component" value="Chromosome"/>
</dbReference>
<dbReference type="GO" id="GO:0005829">
    <property type="term" value="C:cytosol"/>
    <property type="evidence" value="ECO:0007669"/>
    <property type="project" value="TreeGrafter"/>
</dbReference>
<dbReference type="GO" id="GO:0004751">
    <property type="term" value="F:ribose-5-phosphate isomerase activity"/>
    <property type="evidence" value="ECO:0007669"/>
    <property type="project" value="UniProtKB-UniRule"/>
</dbReference>
<dbReference type="GO" id="GO:0006014">
    <property type="term" value="P:D-ribose metabolic process"/>
    <property type="evidence" value="ECO:0007669"/>
    <property type="project" value="TreeGrafter"/>
</dbReference>
<dbReference type="GO" id="GO:0009052">
    <property type="term" value="P:pentose-phosphate shunt, non-oxidative branch"/>
    <property type="evidence" value="ECO:0007669"/>
    <property type="project" value="UniProtKB-UniRule"/>
</dbReference>
<dbReference type="CDD" id="cd01398">
    <property type="entry name" value="RPI_A"/>
    <property type="match status" value="1"/>
</dbReference>
<dbReference type="FunFam" id="3.30.70.260:FF:000018">
    <property type="entry name" value="Ribose-5-phosphate isomerase A"/>
    <property type="match status" value="1"/>
</dbReference>
<dbReference type="Gene3D" id="3.30.70.260">
    <property type="match status" value="1"/>
</dbReference>
<dbReference type="Gene3D" id="3.40.50.1360">
    <property type="match status" value="1"/>
</dbReference>
<dbReference type="HAMAP" id="MF_00170">
    <property type="entry name" value="Rib_5P_isom_A"/>
    <property type="match status" value="1"/>
</dbReference>
<dbReference type="InterPro" id="IPR037171">
    <property type="entry name" value="NagB/RpiA_transferase-like"/>
</dbReference>
<dbReference type="InterPro" id="IPR020672">
    <property type="entry name" value="Ribose5P_isomerase_typA_subgr"/>
</dbReference>
<dbReference type="InterPro" id="IPR004788">
    <property type="entry name" value="Ribose5P_isomerase_type_A"/>
</dbReference>
<dbReference type="NCBIfam" id="NF001924">
    <property type="entry name" value="PRK00702.1"/>
    <property type="match status" value="1"/>
</dbReference>
<dbReference type="NCBIfam" id="TIGR00021">
    <property type="entry name" value="rpiA"/>
    <property type="match status" value="1"/>
</dbReference>
<dbReference type="PANTHER" id="PTHR11934">
    <property type="entry name" value="RIBOSE-5-PHOSPHATE ISOMERASE"/>
    <property type="match status" value="1"/>
</dbReference>
<dbReference type="PANTHER" id="PTHR11934:SF0">
    <property type="entry name" value="RIBOSE-5-PHOSPHATE ISOMERASE"/>
    <property type="match status" value="1"/>
</dbReference>
<dbReference type="Pfam" id="PF06026">
    <property type="entry name" value="Rib_5-P_isom_A"/>
    <property type="match status" value="1"/>
</dbReference>
<dbReference type="SUPFAM" id="SSF75445">
    <property type="entry name" value="D-ribose-5-phosphate isomerase (RpiA), lid domain"/>
    <property type="match status" value="1"/>
</dbReference>
<dbReference type="SUPFAM" id="SSF100950">
    <property type="entry name" value="NagB/RpiA/CoA transferase-like"/>
    <property type="match status" value="1"/>
</dbReference>
<sequence length="254" mass="27573">MHERNTTTNTPLDVTAQKLLVAQRSVDTLVQEGVLHAHMSIGLGTGSTAMPAVKRIADHLARGTLSDIAAVPTSFQTALICERYNIPLFSLSSKRIGGKLDVTIDGADEIDTQNFVIKGGGAALLQEKIAAYNSAHFVIIVDETKVVETLGTRAALPIEVVPEARMSVMRTLQDWGLSVHIREAVRKKGPVVTDHGNFILDARWQSLPTRTPQDMERALNALPGVIENGLFTERTVRVFVAHADGSVEERSASF</sequence>
<reference key="1">
    <citation type="journal article" date="2008" name="BMC Microbiol.">
        <title>Complete genome sequence of Treponema pallidum ssp. pallidum strain SS14 determined with oligonucleotide arrays.</title>
        <authorList>
            <person name="Matejkova P."/>
            <person name="Strouhal M."/>
            <person name="Smajs D."/>
            <person name="Norris S.J."/>
            <person name="Palzkill T."/>
            <person name="Petrosino J.F."/>
            <person name="Sodergren E."/>
            <person name="Norton J.E."/>
            <person name="Singh J."/>
            <person name="Richmond T.A."/>
            <person name="Molla M.N."/>
            <person name="Albert T.J."/>
            <person name="Weinstock G.M."/>
        </authorList>
    </citation>
    <scope>NUCLEOTIDE SEQUENCE [LARGE SCALE GENOMIC DNA]</scope>
    <source>
        <strain>SS14</strain>
    </source>
</reference>